<feature type="chain" id="PRO_1000054782" description="Small ribosomal subunit protein uS15">
    <location>
        <begin position="1"/>
        <end position="89"/>
    </location>
</feature>
<protein>
    <recommendedName>
        <fullName evidence="1">Small ribosomal subunit protein uS15</fullName>
    </recommendedName>
    <alternativeName>
        <fullName evidence="2">30S ribosomal protein S15</fullName>
    </alternativeName>
</protein>
<accession>Q0RDT0</accession>
<proteinExistence type="inferred from homology"/>
<name>RS15_FRAAA</name>
<dbReference type="EMBL" id="CT573213">
    <property type="protein sequence ID" value="CAJ64386.1"/>
    <property type="molecule type" value="Genomic_DNA"/>
</dbReference>
<dbReference type="RefSeq" id="WP_009742365.1">
    <property type="nucleotide sequence ID" value="NC_008278.1"/>
</dbReference>
<dbReference type="SMR" id="Q0RDT0"/>
<dbReference type="STRING" id="326424.FRAAL5754"/>
<dbReference type="KEGG" id="fal:FRAAL5754"/>
<dbReference type="eggNOG" id="COG0184">
    <property type="taxonomic scope" value="Bacteria"/>
</dbReference>
<dbReference type="HOGENOM" id="CLU_148518_0_0_11"/>
<dbReference type="OrthoDB" id="9799262at2"/>
<dbReference type="Proteomes" id="UP000000657">
    <property type="component" value="Chromosome"/>
</dbReference>
<dbReference type="GO" id="GO:0022627">
    <property type="term" value="C:cytosolic small ribosomal subunit"/>
    <property type="evidence" value="ECO:0007669"/>
    <property type="project" value="TreeGrafter"/>
</dbReference>
<dbReference type="GO" id="GO:0019843">
    <property type="term" value="F:rRNA binding"/>
    <property type="evidence" value="ECO:0007669"/>
    <property type="project" value="UniProtKB-UniRule"/>
</dbReference>
<dbReference type="GO" id="GO:0003735">
    <property type="term" value="F:structural constituent of ribosome"/>
    <property type="evidence" value="ECO:0007669"/>
    <property type="project" value="InterPro"/>
</dbReference>
<dbReference type="GO" id="GO:0006412">
    <property type="term" value="P:translation"/>
    <property type="evidence" value="ECO:0007669"/>
    <property type="project" value="UniProtKB-UniRule"/>
</dbReference>
<dbReference type="CDD" id="cd00353">
    <property type="entry name" value="Ribosomal_S15p_S13e"/>
    <property type="match status" value="1"/>
</dbReference>
<dbReference type="FunFam" id="1.10.287.10:FF:000002">
    <property type="entry name" value="30S ribosomal protein S15"/>
    <property type="match status" value="1"/>
</dbReference>
<dbReference type="Gene3D" id="6.10.250.3130">
    <property type="match status" value="1"/>
</dbReference>
<dbReference type="Gene3D" id="1.10.287.10">
    <property type="entry name" value="S15/NS1, RNA-binding"/>
    <property type="match status" value="1"/>
</dbReference>
<dbReference type="HAMAP" id="MF_01343_B">
    <property type="entry name" value="Ribosomal_uS15_B"/>
    <property type="match status" value="1"/>
</dbReference>
<dbReference type="InterPro" id="IPR000589">
    <property type="entry name" value="Ribosomal_uS15"/>
</dbReference>
<dbReference type="InterPro" id="IPR005290">
    <property type="entry name" value="Ribosomal_uS15_bac-type"/>
</dbReference>
<dbReference type="InterPro" id="IPR009068">
    <property type="entry name" value="uS15_NS1_RNA-bd_sf"/>
</dbReference>
<dbReference type="NCBIfam" id="TIGR00952">
    <property type="entry name" value="S15_bact"/>
    <property type="match status" value="1"/>
</dbReference>
<dbReference type="PANTHER" id="PTHR23321">
    <property type="entry name" value="RIBOSOMAL PROTEIN S15, BACTERIAL AND ORGANELLAR"/>
    <property type="match status" value="1"/>
</dbReference>
<dbReference type="PANTHER" id="PTHR23321:SF26">
    <property type="entry name" value="SMALL RIBOSOMAL SUBUNIT PROTEIN US15M"/>
    <property type="match status" value="1"/>
</dbReference>
<dbReference type="Pfam" id="PF00312">
    <property type="entry name" value="Ribosomal_S15"/>
    <property type="match status" value="1"/>
</dbReference>
<dbReference type="SMART" id="SM01387">
    <property type="entry name" value="Ribosomal_S15"/>
    <property type="match status" value="1"/>
</dbReference>
<dbReference type="SUPFAM" id="SSF47060">
    <property type="entry name" value="S15/NS1 RNA-binding domain"/>
    <property type="match status" value="1"/>
</dbReference>
<dbReference type="PROSITE" id="PS00362">
    <property type="entry name" value="RIBOSOMAL_S15"/>
    <property type="match status" value="1"/>
</dbReference>
<reference key="1">
    <citation type="journal article" date="2007" name="Genome Res.">
        <title>Genome characteristics of facultatively symbiotic Frankia sp. strains reflect host range and host plant biogeography.</title>
        <authorList>
            <person name="Normand P."/>
            <person name="Lapierre P."/>
            <person name="Tisa L.S."/>
            <person name="Gogarten J.P."/>
            <person name="Alloisio N."/>
            <person name="Bagnarol E."/>
            <person name="Bassi C.A."/>
            <person name="Berry A.M."/>
            <person name="Bickhart D.M."/>
            <person name="Choisne N."/>
            <person name="Couloux A."/>
            <person name="Cournoyer B."/>
            <person name="Cruveiller S."/>
            <person name="Daubin V."/>
            <person name="Demange N."/>
            <person name="Francino M.P."/>
            <person name="Goltsman E."/>
            <person name="Huang Y."/>
            <person name="Kopp O.R."/>
            <person name="Labarre L."/>
            <person name="Lapidus A."/>
            <person name="Lavire C."/>
            <person name="Marechal J."/>
            <person name="Martinez M."/>
            <person name="Mastronunzio J.E."/>
            <person name="Mullin B.C."/>
            <person name="Niemann J."/>
            <person name="Pujic P."/>
            <person name="Rawnsley T."/>
            <person name="Rouy Z."/>
            <person name="Schenowitz C."/>
            <person name="Sellstedt A."/>
            <person name="Tavares F."/>
            <person name="Tomkins J.P."/>
            <person name="Vallenet D."/>
            <person name="Valverde C."/>
            <person name="Wall L.G."/>
            <person name="Wang Y."/>
            <person name="Medigue C."/>
            <person name="Benson D.R."/>
        </authorList>
    </citation>
    <scope>NUCLEOTIDE SEQUENCE [LARGE SCALE GENOMIC DNA]</scope>
    <source>
        <strain>DSM 45986 / CECT 9034 / ACN14a</strain>
    </source>
</reference>
<comment type="function">
    <text evidence="1">One of the primary rRNA binding proteins, it binds directly to 16S rRNA where it helps nucleate assembly of the platform of the 30S subunit by binding and bridging several RNA helices of the 16S rRNA.</text>
</comment>
<comment type="function">
    <text evidence="1">Forms an intersubunit bridge (bridge B4) with the 23S rRNA of the 50S subunit in the ribosome.</text>
</comment>
<comment type="subunit">
    <text evidence="1">Part of the 30S ribosomal subunit. Forms a bridge to the 50S subunit in the 70S ribosome, contacting the 23S rRNA.</text>
</comment>
<comment type="similarity">
    <text evidence="1">Belongs to the universal ribosomal protein uS15 family.</text>
</comment>
<evidence type="ECO:0000255" key="1">
    <source>
        <dbReference type="HAMAP-Rule" id="MF_01343"/>
    </source>
</evidence>
<evidence type="ECO:0000305" key="2"/>
<gene>
    <name evidence="1" type="primary">rpsO</name>
    <name type="ordered locus">FRAAL5754</name>
</gene>
<sequence>MPLASDVKQKIMSDYATVERDTGSPEVQVAMLTRRISDLTEHLKVHKHDHHSRRGLLLLVGRRRRLLNYLSKTDINRYRALIERLGLRR</sequence>
<organism>
    <name type="scientific">Frankia alni (strain DSM 45986 / CECT 9034 / ACN14a)</name>
    <dbReference type="NCBI Taxonomy" id="326424"/>
    <lineage>
        <taxon>Bacteria</taxon>
        <taxon>Bacillati</taxon>
        <taxon>Actinomycetota</taxon>
        <taxon>Actinomycetes</taxon>
        <taxon>Frankiales</taxon>
        <taxon>Frankiaceae</taxon>
        <taxon>Frankia</taxon>
    </lineage>
</organism>
<keyword id="KW-1185">Reference proteome</keyword>
<keyword id="KW-0687">Ribonucleoprotein</keyword>
<keyword id="KW-0689">Ribosomal protein</keyword>
<keyword id="KW-0694">RNA-binding</keyword>
<keyword id="KW-0699">rRNA-binding</keyword>